<evidence type="ECO:0000255" key="1"/>
<evidence type="ECO:0000305" key="2"/>
<feature type="chain" id="PRO_0000303972" description="Putative uncharacterized protein C1347.14c">
    <location>
        <begin position="1"/>
        <end position="121"/>
    </location>
</feature>
<feature type="transmembrane region" description="Helical" evidence="1">
    <location>
        <begin position="11"/>
        <end position="31"/>
    </location>
</feature>
<proteinExistence type="predicted"/>
<sequence>MLLSNKIKHSIFQFFVFPFYYFLLIITEIGFSSCIQYSGLSAYFPIKCTLSLLSSPIRRVQVISDSLNVKGKRLLLVVTAHSRLRVNADIGGLISNIGCGKRPTILSTVNTGSNTSREGKS</sequence>
<gene>
    <name type="ORF">SPBC1347.14c</name>
</gene>
<reference key="1">
    <citation type="journal article" date="2002" name="Nature">
        <title>The genome sequence of Schizosaccharomyces pombe.</title>
        <authorList>
            <person name="Wood V."/>
            <person name="Gwilliam R."/>
            <person name="Rajandream M.A."/>
            <person name="Lyne M.H."/>
            <person name="Lyne R."/>
            <person name="Stewart A."/>
            <person name="Sgouros J.G."/>
            <person name="Peat N."/>
            <person name="Hayles J."/>
            <person name="Baker S.G."/>
            <person name="Basham D."/>
            <person name="Bowman S."/>
            <person name="Brooks K."/>
            <person name="Brown D."/>
            <person name="Brown S."/>
            <person name="Chillingworth T."/>
            <person name="Churcher C.M."/>
            <person name="Collins M."/>
            <person name="Connor R."/>
            <person name="Cronin A."/>
            <person name="Davis P."/>
            <person name="Feltwell T."/>
            <person name="Fraser A."/>
            <person name="Gentles S."/>
            <person name="Goble A."/>
            <person name="Hamlin N."/>
            <person name="Harris D.E."/>
            <person name="Hidalgo J."/>
            <person name="Hodgson G."/>
            <person name="Holroyd S."/>
            <person name="Hornsby T."/>
            <person name="Howarth S."/>
            <person name="Huckle E.J."/>
            <person name="Hunt S."/>
            <person name="Jagels K."/>
            <person name="James K.D."/>
            <person name="Jones L."/>
            <person name="Jones M."/>
            <person name="Leather S."/>
            <person name="McDonald S."/>
            <person name="McLean J."/>
            <person name="Mooney P."/>
            <person name="Moule S."/>
            <person name="Mungall K.L."/>
            <person name="Murphy L.D."/>
            <person name="Niblett D."/>
            <person name="Odell C."/>
            <person name="Oliver K."/>
            <person name="O'Neil S."/>
            <person name="Pearson D."/>
            <person name="Quail M.A."/>
            <person name="Rabbinowitsch E."/>
            <person name="Rutherford K.M."/>
            <person name="Rutter S."/>
            <person name="Saunders D."/>
            <person name="Seeger K."/>
            <person name="Sharp S."/>
            <person name="Skelton J."/>
            <person name="Simmonds M.N."/>
            <person name="Squares R."/>
            <person name="Squares S."/>
            <person name="Stevens K."/>
            <person name="Taylor K."/>
            <person name="Taylor R.G."/>
            <person name="Tivey A."/>
            <person name="Walsh S.V."/>
            <person name="Warren T."/>
            <person name="Whitehead S."/>
            <person name="Woodward J.R."/>
            <person name="Volckaert G."/>
            <person name="Aert R."/>
            <person name="Robben J."/>
            <person name="Grymonprez B."/>
            <person name="Weltjens I."/>
            <person name="Vanstreels E."/>
            <person name="Rieger M."/>
            <person name="Schaefer M."/>
            <person name="Mueller-Auer S."/>
            <person name="Gabel C."/>
            <person name="Fuchs M."/>
            <person name="Duesterhoeft A."/>
            <person name="Fritzc C."/>
            <person name="Holzer E."/>
            <person name="Moestl D."/>
            <person name="Hilbert H."/>
            <person name="Borzym K."/>
            <person name="Langer I."/>
            <person name="Beck A."/>
            <person name="Lehrach H."/>
            <person name="Reinhardt R."/>
            <person name="Pohl T.M."/>
            <person name="Eger P."/>
            <person name="Zimmermann W."/>
            <person name="Wedler H."/>
            <person name="Wambutt R."/>
            <person name="Purnelle B."/>
            <person name="Goffeau A."/>
            <person name="Cadieu E."/>
            <person name="Dreano S."/>
            <person name="Gloux S."/>
            <person name="Lelaure V."/>
            <person name="Mottier S."/>
            <person name="Galibert F."/>
            <person name="Aves S.J."/>
            <person name="Xiang Z."/>
            <person name="Hunt C."/>
            <person name="Moore K."/>
            <person name="Hurst S.M."/>
            <person name="Lucas M."/>
            <person name="Rochet M."/>
            <person name="Gaillardin C."/>
            <person name="Tallada V.A."/>
            <person name="Garzon A."/>
            <person name="Thode G."/>
            <person name="Daga R.R."/>
            <person name="Cruzado L."/>
            <person name="Jimenez J."/>
            <person name="Sanchez M."/>
            <person name="del Rey F."/>
            <person name="Benito J."/>
            <person name="Dominguez A."/>
            <person name="Revuelta J.L."/>
            <person name="Moreno S."/>
            <person name="Armstrong J."/>
            <person name="Forsburg S.L."/>
            <person name="Cerutti L."/>
            <person name="Lowe T."/>
            <person name="McCombie W.R."/>
            <person name="Paulsen I."/>
            <person name="Potashkin J."/>
            <person name="Shpakovski G.V."/>
            <person name="Ussery D."/>
            <person name="Barrell B.G."/>
            <person name="Nurse P."/>
        </authorList>
    </citation>
    <scope>NUCLEOTIDE SEQUENCE [LARGE SCALE GENOMIC DNA]</scope>
    <source>
        <strain>972 / ATCC 24843</strain>
    </source>
</reference>
<organism>
    <name type="scientific">Schizosaccharomyces pombe (strain 972 / ATCC 24843)</name>
    <name type="common">Fission yeast</name>
    <dbReference type="NCBI Taxonomy" id="284812"/>
    <lineage>
        <taxon>Eukaryota</taxon>
        <taxon>Fungi</taxon>
        <taxon>Dikarya</taxon>
        <taxon>Ascomycota</taxon>
        <taxon>Taphrinomycotina</taxon>
        <taxon>Schizosaccharomycetes</taxon>
        <taxon>Schizosaccharomycetales</taxon>
        <taxon>Schizosaccharomycetaceae</taxon>
        <taxon>Schizosaccharomyces</taxon>
    </lineage>
</organism>
<dbReference type="EMBL" id="CU329671">
    <property type="protein sequence ID" value="CAJ76913.1"/>
    <property type="molecule type" value="Genomic_DNA"/>
</dbReference>
<dbReference type="RefSeq" id="XP_001713150.1">
    <property type="nucleotide sequence ID" value="XM_001713098.1"/>
</dbReference>
<dbReference type="STRING" id="284812.Q2HQL6"/>
<dbReference type="iPTMnet" id="Q2HQL6"/>
<dbReference type="PaxDb" id="4896-SPBC1347.14c.1"/>
<dbReference type="EnsemblFungi" id="SPBC1347.14c.1">
    <property type="protein sequence ID" value="SPBC1347.14c.1:pep"/>
    <property type="gene ID" value="SPBC1347.14c"/>
</dbReference>
<dbReference type="PomBase" id="SPBC1347.14c"/>
<dbReference type="VEuPathDB" id="FungiDB:SPBC1347.14c"/>
<dbReference type="HOGENOM" id="CLU_2039418_0_0_1"/>
<dbReference type="InParanoid" id="Q2HQL6"/>
<dbReference type="PRO" id="PR:Q2HQL6"/>
<dbReference type="Proteomes" id="UP000002485">
    <property type="component" value="Chromosome II"/>
</dbReference>
<dbReference type="GO" id="GO:0016020">
    <property type="term" value="C:membrane"/>
    <property type="evidence" value="ECO:0007669"/>
    <property type="project" value="UniProtKB-SubCell"/>
</dbReference>
<accession>Q2HQL6</accession>
<name>YGEE_SCHPO</name>
<comment type="subcellular location">
    <subcellularLocation>
        <location evidence="2">Membrane</location>
        <topology evidence="2">Single-pass membrane protein</topology>
    </subcellularLocation>
</comment>
<keyword id="KW-0472">Membrane</keyword>
<keyword id="KW-1185">Reference proteome</keyword>
<keyword id="KW-0812">Transmembrane</keyword>
<keyword id="KW-1133">Transmembrane helix</keyword>
<protein>
    <recommendedName>
        <fullName>Putative uncharacterized protein C1347.14c</fullName>
    </recommendedName>
</protein>